<organism>
    <name type="scientific">Geobacillus kaustophilus (strain HTA426)</name>
    <dbReference type="NCBI Taxonomy" id="235909"/>
    <lineage>
        <taxon>Bacteria</taxon>
        <taxon>Bacillati</taxon>
        <taxon>Bacillota</taxon>
        <taxon>Bacilli</taxon>
        <taxon>Bacillales</taxon>
        <taxon>Anoxybacillaceae</taxon>
        <taxon>Geobacillus</taxon>
        <taxon>Geobacillus thermoleovorans group</taxon>
    </lineage>
</organism>
<name>RLMH_GEOKA</name>
<sequence length="159" mass="17972">MHISIVAVGKLKEKYLIAGINEYTKRLSAYAKIDIIEVADEKTPERASELEEEQIKEREGGRLLAKIPHDAHVIALAIEGKMQSSEQFAARLDELATYGKSKVVFVIGGSLGLSKQVMARADETLSFSKMTFPHQLMRLILLEQIYRAFRINRGEPYHK</sequence>
<dbReference type="EC" id="2.1.1.177" evidence="1"/>
<dbReference type="EMBL" id="BA000043">
    <property type="protein sequence ID" value="BAD77752.1"/>
    <property type="molecule type" value="Genomic_DNA"/>
</dbReference>
<dbReference type="RefSeq" id="WP_011232931.1">
    <property type="nucleotide sequence ID" value="NC_006510.1"/>
</dbReference>
<dbReference type="SMR" id="Q5KU84"/>
<dbReference type="STRING" id="235909.GK3467"/>
<dbReference type="GeneID" id="32065344"/>
<dbReference type="KEGG" id="gka:GK3467"/>
<dbReference type="eggNOG" id="COG1576">
    <property type="taxonomic scope" value="Bacteria"/>
</dbReference>
<dbReference type="HOGENOM" id="CLU_100552_0_0_9"/>
<dbReference type="Proteomes" id="UP000001172">
    <property type="component" value="Chromosome"/>
</dbReference>
<dbReference type="GO" id="GO:0005737">
    <property type="term" value="C:cytoplasm"/>
    <property type="evidence" value="ECO:0007669"/>
    <property type="project" value="UniProtKB-SubCell"/>
</dbReference>
<dbReference type="GO" id="GO:0070038">
    <property type="term" value="F:rRNA (pseudouridine-N3-)-methyltransferase activity"/>
    <property type="evidence" value="ECO:0007669"/>
    <property type="project" value="UniProtKB-UniRule"/>
</dbReference>
<dbReference type="CDD" id="cd18081">
    <property type="entry name" value="RlmH-like"/>
    <property type="match status" value="1"/>
</dbReference>
<dbReference type="Gene3D" id="3.40.1280.10">
    <property type="match status" value="1"/>
</dbReference>
<dbReference type="HAMAP" id="MF_00658">
    <property type="entry name" value="23SrRNA_methyltr_H"/>
    <property type="match status" value="1"/>
</dbReference>
<dbReference type="InterPro" id="IPR029028">
    <property type="entry name" value="Alpha/beta_knot_MTases"/>
</dbReference>
<dbReference type="InterPro" id="IPR003742">
    <property type="entry name" value="RlmH-like"/>
</dbReference>
<dbReference type="InterPro" id="IPR029026">
    <property type="entry name" value="tRNA_m1G_MTases_N"/>
</dbReference>
<dbReference type="NCBIfam" id="NF000985">
    <property type="entry name" value="PRK00103.1-3"/>
    <property type="match status" value="1"/>
</dbReference>
<dbReference type="NCBIfam" id="TIGR00246">
    <property type="entry name" value="tRNA_RlmH_YbeA"/>
    <property type="match status" value="1"/>
</dbReference>
<dbReference type="PANTHER" id="PTHR33603">
    <property type="entry name" value="METHYLTRANSFERASE"/>
    <property type="match status" value="1"/>
</dbReference>
<dbReference type="PANTHER" id="PTHR33603:SF1">
    <property type="entry name" value="RIBOSOMAL RNA LARGE SUBUNIT METHYLTRANSFERASE H"/>
    <property type="match status" value="1"/>
</dbReference>
<dbReference type="Pfam" id="PF02590">
    <property type="entry name" value="SPOUT_MTase"/>
    <property type="match status" value="1"/>
</dbReference>
<dbReference type="PIRSF" id="PIRSF004505">
    <property type="entry name" value="MT_bac"/>
    <property type="match status" value="1"/>
</dbReference>
<dbReference type="SUPFAM" id="SSF75217">
    <property type="entry name" value="alpha/beta knot"/>
    <property type="match status" value="1"/>
</dbReference>
<comment type="function">
    <text evidence="1">Specifically methylates the pseudouridine at position 1915 (m3Psi1915) in 23S rRNA.</text>
</comment>
<comment type="catalytic activity">
    <reaction evidence="1">
        <text>pseudouridine(1915) in 23S rRNA + S-adenosyl-L-methionine = N(3)-methylpseudouridine(1915) in 23S rRNA + S-adenosyl-L-homocysteine + H(+)</text>
        <dbReference type="Rhea" id="RHEA:42752"/>
        <dbReference type="Rhea" id="RHEA-COMP:10221"/>
        <dbReference type="Rhea" id="RHEA-COMP:10222"/>
        <dbReference type="ChEBI" id="CHEBI:15378"/>
        <dbReference type="ChEBI" id="CHEBI:57856"/>
        <dbReference type="ChEBI" id="CHEBI:59789"/>
        <dbReference type="ChEBI" id="CHEBI:65314"/>
        <dbReference type="ChEBI" id="CHEBI:74486"/>
        <dbReference type="EC" id="2.1.1.177"/>
    </reaction>
</comment>
<comment type="subunit">
    <text evidence="1">Homodimer.</text>
</comment>
<comment type="subcellular location">
    <subcellularLocation>
        <location evidence="1">Cytoplasm</location>
    </subcellularLocation>
</comment>
<comment type="similarity">
    <text evidence="1">Belongs to the RNA methyltransferase RlmH family.</text>
</comment>
<accession>Q5KU84</accession>
<feature type="chain" id="PRO_0000198121" description="Ribosomal RNA large subunit methyltransferase H">
    <location>
        <begin position="1"/>
        <end position="159"/>
    </location>
</feature>
<feature type="binding site" evidence="1">
    <location>
        <position position="76"/>
    </location>
    <ligand>
        <name>S-adenosyl-L-methionine</name>
        <dbReference type="ChEBI" id="CHEBI:59789"/>
    </ligand>
</feature>
<feature type="binding site" evidence="1">
    <location>
        <position position="108"/>
    </location>
    <ligand>
        <name>S-adenosyl-L-methionine</name>
        <dbReference type="ChEBI" id="CHEBI:59789"/>
    </ligand>
</feature>
<feature type="binding site" evidence="1">
    <location>
        <begin position="127"/>
        <end position="132"/>
    </location>
    <ligand>
        <name>S-adenosyl-L-methionine</name>
        <dbReference type="ChEBI" id="CHEBI:59789"/>
    </ligand>
</feature>
<protein>
    <recommendedName>
        <fullName evidence="1">Ribosomal RNA large subunit methyltransferase H</fullName>
        <ecNumber evidence="1">2.1.1.177</ecNumber>
    </recommendedName>
    <alternativeName>
        <fullName evidence="1">23S rRNA (pseudouridine1915-N3)-methyltransferase</fullName>
    </alternativeName>
    <alternativeName>
        <fullName evidence="1">23S rRNA m3Psi1915 methyltransferase</fullName>
    </alternativeName>
    <alternativeName>
        <fullName evidence="1">rRNA (pseudouridine-N3-)-methyltransferase RlmH</fullName>
    </alternativeName>
</protein>
<reference key="1">
    <citation type="journal article" date="2004" name="Nucleic Acids Res.">
        <title>Thermoadaptation trait revealed by the genome sequence of thermophilic Geobacillus kaustophilus.</title>
        <authorList>
            <person name="Takami H."/>
            <person name="Takaki Y."/>
            <person name="Chee G.-J."/>
            <person name="Nishi S."/>
            <person name="Shimamura S."/>
            <person name="Suzuki H."/>
            <person name="Matsui S."/>
            <person name="Uchiyama I."/>
        </authorList>
    </citation>
    <scope>NUCLEOTIDE SEQUENCE [LARGE SCALE GENOMIC DNA]</scope>
    <source>
        <strain>HTA426</strain>
    </source>
</reference>
<keyword id="KW-0963">Cytoplasm</keyword>
<keyword id="KW-0489">Methyltransferase</keyword>
<keyword id="KW-1185">Reference proteome</keyword>
<keyword id="KW-0698">rRNA processing</keyword>
<keyword id="KW-0949">S-adenosyl-L-methionine</keyword>
<keyword id="KW-0808">Transferase</keyword>
<evidence type="ECO:0000255" key="1">
    <source>
        <dbReference type="HAMAP-Rule" id="MF_00658"/>
    </source>
</evidence>
<proteinExistence type="inferred from homology"/>
<gene>
    <name evidence="1" type="primary">rlmH</name>
    <name type="ordered locus">GK3467</name>
</gene>